<sequence>MTLTSIRRGYHVIKTLLQYGLDEVLPPKMTPWYFTLARSSLFWIRNKHKSKPGGERLKLAMQELGPVYIKLGQMLSTRRDLLSDEWAIELAMLQDKVPPFDGVLARKAIEAELKASIESLFDDFDETPLASASISQVHTATLKSNGKAVVLKVLRPNVEAKILADLQLMSQTANLLEYFLGEGNRLRPAEVIEDYRVTILGELNLKLEALNAIKLRNNFLNSDALYVPYVYEEFCYPRLMVMERIYGIPVSDIAALKAQGTNFKLLAERGVELFFTQVFRDNFFHADMHPGNIFISRDHPENPYYIGLDCGIMGTLSEVDKRYLAENFLAFFNRDYHRIAQLYIESGWVSEKTDLQAFEQAIKVVCEPMFNKPLDEISFGHVLLELFRTARSFDIVVQPQLVLLEKTLLYIEGLGRQLYPQLDLWQTAKPFLEQWMAEQVGPKAMFKKVSTKLPYWSDKLPEFPELIYDNLKLGRKLLSSQQQMLDKYLKHQQQAHKSNYMLITSAVLLICGTLLFNQDATLWSPYVCLTSGVLMWFIGWRSRPKNRKF</sequence>
<reference key="1">
    <citation type="submission" date="2006-12" db="EMBL/GenBank/DDBJ databases">
        <title>Complete sequence of Shewanella sp. W3-18-1.</title>
        <authorList>
            <consortium name="US DOE Joint Genome Institute"/>
            <person name="Copeland A."/>
            <person name="Lucas S."/>
            <person name="Lapidus A."/>
            <person name="Barry K."/>
            <person name="Detter J.C."/>
            <person name="Glavina del Rio T."/>
            <person name="Hammon N."/>
            <person name="Israni S."/>
            <person name="Dalin E."/>
            <person name="Tice H."/>
            <person name="Pitluck S."/>
            <person name="Chain P."/>
            <person name="Malfatti S."/>
            <person name="Shin M."/>
            <person name="Vergez L."/>
            <person name="Schmutz J."/>
            <person name="Larimer F."/>
            <person name="Land M."/>
            <person name="Hauser L."/>
            <person name="Kyrpides N."/>
            <person name="Lykidis A."/>
            <person name="Tiedje J."/>
            <person name="Richardson P."/>
        </authorList>
    </citation>
    <scope>NUCLEOTIDE SEQUENCE [LARGE SCALE GENOMIC DNA]</scope>
    <source>
        <strain>W3-18-1</strain>
    </source>
</reference>
<organism>
    <name type="scientific">Shewanella sp. (strain W3-18-1)</name>
    <dbReference type="NCBI Taxonomy" id="351745"/>
    <lineage>
        <taxon>Bacteria</taxon>
        <taxon>Pseudomonadati</taxon>
        <taxon>Pseudomonadota</taxon>
        <taxon>Gammaproteobacteria</taxon>
        <taxon>Alteromonadales</taxon>
        <taxon>Shewanellaceae</taxon>
        <taxon>Shewanella</taxon>
    </lineage>
</organism>
<keyword id="KW-0067">ATP-binding</keyword>
<keyword id="KW-0997">Cell inner membrane</keyword>
<keyword id="KW-1003">Cell membrane</keyword>
<keyword id="KW-0418">Kinase</keyword>
<keyword id="KW-0472">Membrane</keyword>
<keyword id="KW-0547">Nucleotide-binding</keyword>
<keyword id="KW-0808">Transferase</keyword>
<keyword id="KW-0812">Transmembrane</keyword>
<keyword id="KW-1133">Transmembrane helix</keyword>
<keyword id="KW-0831">Ubiquinone biosynthesis</keyword>
<accession>A1RP80</accession>
<gene>
    <name evidence="1" type="primary">ubiB</name>
    <name type="ordered locus">Sputw3181_3666</name>
</gene>
<evidence type="ECO:0000255" key="1">
    <source>
        <dbReference type="HAMAP-Rule" id="MF_00414"/>
    </source>
</evidence>
<proteinExistence type="inferred from homology"/>
<comment type="function">
    <text evidence="1">Is probably a protein kinase regulator of UbiI activity which is involved in aerobic coenzyme Q (ubiquinone) biosynthesis.</text>
</comment>
<comment type="pathway">
    <text>Cofactor biosynthesis; ubiquinone biosynthesis [regulation].</text>
</comment>
<comment type="subcellular location">
    <subcellularLocation>
        <location evidence="1">Cell inner membrane</location>
        <topology evidence="1">Multi-pass membrane protein</topology>
    </subcellularLocation>
</comment>
<comment type="similarity">
    <text evidence="1">Belongs to the ABC1 family. UbiB subfamily.</text>
</comment>
<dbReference type="EC" id="2.7.-.-" evidence="1"/>
<dbReference type="EMBL" id="CP000503">
    <property type="protein sequence ID" value="ABM26475.1"/>
    <property type="molecule type" value="Genomic_DNA"/>
</dbReference>
<dbReference type="RefSeq" id="WP_011790906.1">
    <property type="nucleotide sequence ID" value="NC_008750.1"/>
</dbReference>
<dbReference type="SMR" id="A1RP80"/>
<dbReference type="KEGG" id="shw:Sputw3181_3666"/>
<dbReference type="HOGENOM" id="CLU_006533_0_0_6"/>
<dbReference type="UniPathway" id="UPA00232"/>
<dbReference type="Proteomes" id="UP000002597">
    <property type="component" value="Chromosome"/>
</dbReference>
<dbReference type="GO" id="GO:0005886">
    <property type="term" value="C:plasma membrane"/>
    <property type="evidence" value="ECO:0007669"/>
    <property type="project" value="UniProtKB-SubCell"/>
</dbReference>
<dbReference type="GO" id="GO:0005524">
    <property type="term" value="F:ATP binding"/>
    <property type="evidence" value="ECO:0007669"/>
    <property type="project" value="UniProtKB-KW"/>
</dbReference>
<dbReference type="GO" id="GO:0004672">
    <property type="term" value="F:protein kinase activity"/>
    <property type="evidence" value="ECO:0007669"/>
    <property type="project" value="UniProtKB-UniRule"/>
</dbReference>
<dbReference type="GO" id="GO:0010795">
    <property type="term" value="P:regulation of ubiquinone biosynthetic process"/>
    <property type="evidence" value="ECO:0007669"/>
    <property type="project" value="UniProtKB-UniRule"/>
</dbReference>
<dbReference type="GO" id="GO:0006744">
    <property type="term" value="P:ubiquinone biosynthetic process"/>
    <property type="evidence" value="ECO:0007669"/>
    <property type="project" value="UniProtKB-UniPathway"/>
</dbReference>
<dbReference type="CDD" id="cd13972">
    <property type="entry name" value="UbiB"/>
    <property type="match status" value="1"/>
</dbReference>
<dbReference type="HAMAP" id="MF_00414">
    <property type="entry name" value="UbiB"/>
    <property type="match status" value="1"/>
</dbReference>
<dbReference type="InterPro" id="IPR004147">
    <property type="entry name" value="ABC1_dom"/>
</dbReference>
<dbReference type="InterPro" id="IPR011009">
    <property type="entry name" value="Kinase-like_dom_sf"/>
</dbReference>
<dbReference type="InterPro" id="IPR010232">
    <property type="entry name" value="UbiB"/>
</dbReference>
<dbReference type="InterPro" id="IPR045308">
    <property type="entry name" value="UbiB_bact"/>
</dbReference>
<dbReference type="InterPro" id="IPR050154">
    <property type="entry name" value="UbiB_kinase"/>
</dbReference>
<dbReference type="NCBIfam" id="NF003404">
    <property type="entry name" value="PRK04750.1"/>
    <property type="match status" value="1"/>
</dbReference>
<dbReference type="NCBIfam" id="TIGR01982">
    <property type="entry name" value="UbiB"/>
    <property type="match status" value="1"/>
</dbReference>
<dbReference type="PANTHER" id="PTHR10566">
    <property type="entry name" value="CHAPERONE-ACTIVITY OF BC1 COMPLEX CABC1 -RELATED"/>
    <property type="match status" value="1"/>
</dbReference>
<dbReference type="PANTHER" id="PTHR10566:SF113">
    <property type="entry name" value="PROTEIN ACTIVITY OF BC1 COMPLEX KINASE 7, CHLOROPLASTIC"/>
    <property type="match status" value="1"/>
</dbReference>
<dbReference type="Pfam" id="PF03109">
    <property type="entry name" value="ABC1"/>
    <property type="match status" value="1"/>
</dbReference>
<dbReference type="SUPFAM" id="SSF56112">
    <property type="entry name" value="Protein kinase-like (PK-like)"/>
    <property type="match status" value="1"/>
</dbReference>
<protein>
    <recommendedName>
        <fullName evidence="1">Probable protein kinase UbiB</fullName>
        <ecNumber evidence="1">2.7.-.-</ecNumber>
    </recommendedName>
    <alternativeName>
        <fullName evidence="1">Ubiquinone biosynthesis protein UbiB</fullName>
    </alternativeName>
</protein>
<feature type="chain" id="PRO_1000050063" description="Probable protein kinase UbiB">
    <location>
        <begin position="1"/>
        <end position="549"/>
    </location>
</feature>
<feature type="transmembrane region" description="Helical" evidence="1">
    <location>
        <begin position="499"/>
        <end position="516"/>
    </location>
</feature>
<feature type="transmembrane region" description="Helical" evidence="1">
    <location>
        <begin position="521"/>
        <end position="540"/>
    </location>
</feature>
<feature type="domain" description="Protein kinase" evidence="1">
    <location>
        <begin position="123"/>
        <end position="501"/>
    </location>
</feature>
<feature type="active site" description="Proton acceptor" evidence="1">
    <location>
        <position position="287"/>
    </location>
</feature>
<feature type="binding site" evidence="1">
    <location>
        <begin position="129"/>
        <end position="137"/>
    </location>
    <ligand>
        <name>ATP</name>
        <dbReference type="ChEBI" id="CHEBI:30616"/>
    </ligand>
</feature>
<feature type="binding site" evidence="1">
    <location>
        <position position="152"/>
    </location>
    <ligand>
        <name>ATP</name>
        <dbReference type="ChEBI" id="CHEBI:30616"/>
    </ligand>
</feature>
<name>UBIB_SHESW</name>